<keyword id="KW-0067">ATP-binding</keyword>
<keyword id="KW-0114">cAMP</keyword>
<keyword id="KW-0418">Kinase</keyword>
<keyword id="KW-0449">Lipoprotein</keyword>
<keyword id="KW-0519">Myristate</keyword>
<keyword id="KW-0547">Nucleotide-binding</keyword>
<keyword id="KW-0597">Phosphoprotein</keyword>
<keyword id="KW-1185">Reference proteome</keyword>
<keyword id="KW-0723">Serine/threonine-protein kinase</keyword>
<keyword id="KW-0808">Transferase</keyword>
<name>KAPCG_MACMU</name>
<sequence>MGNAAAKKDTEQETVNEFLAKARGDFLYRWGNPAQNTASSDQFERLKTLGTGSYGRVMLVRHRETGNHYAMKILDKQKVVRLKQVEHTLNEKRILQAINFPFLVKLQFSFKDNSNLYLVMEYVPGGEMFSHLRRVGRFSEPQACFYAAQVVLAFQYLHSLDLIHRDLKPENLLIDQQGYLQVTDFGFAKRVKGRTWTLCGTPEYLAPEI</sequence>
<protein>
    <recommendedName>
        <fullName>cAMP-dependent protein kinase catalytic subunit gamma</fullName>
        <shortName>PKA C-gamma</shortName>
        <ecNumber>2.7.11.11</ecNumber>
    </recommendedName>
</protein>
<reference key="1">
    <citation type="journal article" date="1998" name="Genomics">
        <title>The gene encoding the C gamma catalytic subunit of cAMP-dependent protein kinase is a transcribed retroposon.</title>
        <authorList>
            <person name="Reinton N."/>
            <person name="Haugen T.B."/>
            <person name="Orstavik S."/>
            <person name="Skalhegg B.S."/>
            <person name="Hansson V."/>
            <person name="Jahnsen T."/>
            <person name="Tasken K."/>
        </authorList>
    </citation>
    <scope>NUCLEOTIDE SEQUENCE [GENOMIC DNA]</scope>
</reference>
<comment type="function">
    <text>Phosphorylates a large number of substrates in the cytoplasm and the nucleus.</text>
</comment>
<comment type="catalytic activity">
    <reaction>
        <text>L-seryl-[protein] + ATP = O-phospho-L-seryl-[protein] + ADP + H(+)</text>
        <dbReference type="Rhea" id="RHEA:17989"/>
        <dbReference type="Rhea" id="RHEA-COMP:9863"/>
        <dbReference type="Rhea" id="RHEA-COMP:11604"/>
        <dbReference type="ChEBI" id="CHEBI:15378"/>
        <dbReference type="ChEBI" id="CHEBI:29999"/>
        <dbReference type="ChEBI" id="CHEBI:30616"/>
        <dbReference type="ChEBI" id="CHEBI:83421"/>
        <dbReference type="ChEBI" id="CHEBI:456216"/>
        <dbReference type="EC" id="2.7.11.11"/>
    </reaction>
</comment>
<comment type="catalytic activity">
    <reaction>
        <text>L-threonyl-[protein] + ATP = O-phospho-L-threonyl-[protein] + ADP + H(+)</text>
        <dbReference type="Rhea" id="RHEA:46608"/>
        <dbReference type="Rhea" id="RHEA-COMP:11060"/>
        <dbReference type="Rhea" id="RHEA-COMP:11605"/>
        <dbReference type="ChEBI" id="CHEBI:15378"/>
        <dbReference type="ChEBI" id="CHEBI:30013"/>
        <dbReference type="ChEBI" id="CHEBI:30616"/>
        <dbReference type="ChEBI" id="CHEBI:61977"/>
        <dbReference type="ChEBI" id="CHEBI:456216"/>
        <dbReference type="EC" id="2.7.11.11"/>
    </reaction>
</comment>
<comment type="activity regulation">
    <text>Activated by cAMP.</text>
</comment>
<comment type="subunit">
    <text>A number of inactive tetrameric holoenzymes are produced by the combination of homo- or heterodimers of the different regulatory subunits associated with two catalytic subunits. cAMP causes the dissociation of the inactive holoenzyme into a dimer of regulatory subunits bound to four cAMP and two free monomeric catalytic subunits.</text>
</comment>
<comment type="tissue specificity">
    <text>Testis specific.</text>
</comment>
<comment type="similarity">
    <text evidence="4">Belongs to the protein kinase superfamily. AGC Ser/Thr protein kinase family. cAMP subfamily.</text>
</comment>
<dbReference type="EC" id="2.7.11.11"/>
<dbReference type="EMBL" id="AJ001927">
    <property type="protein sequence ID" value="CAA05098.1"/>
    <property type="molecule type" value="Genomic_DNA"/>
</dbReference>
<dbReference type="SMR" id="O62846"/>
<dbReference type="STRING" id="9544.ENSMMUP00000026815"/>
<dbReference type="PaxDb" id="9544-ENSMMUP00000026815"/>
<dbReference type="eggNOG" id="KOG0616">
    <property type="taxonomic scope" value="Eukaryota"/>
</dbReference>
<dbReference type="HOGENOM" id="CLU_000288_63_5_1"/>
<dbReference type="InParanoid" id="O62846"/>
<dbReference type="Proteomes" id="UP000006718">
    <property type="component" value="Unassembled WGS sequence"/>
</dbReference>
<dbReference type="GO" id="GO:0005952">
    <property type="term" value="C:cAMP-dependent protein kinase complex"/>
    <property type="evidence" value="ECO:0000318"/>
    <property type="project" value="GO_Central"/>
</dbReference>
<dbReference type="GO" id="GO:0005829">
    <property type="term" value="C:cytosol"/>
    <property type="evidence" value="ECO:0000318"/>
    <property type="project" value="GO_Central"/>
</dbReference>
<dbReference type="GO" id="GO:0005634">
    <property type="term" value="C:nucleus"/>
    <property type="evidence" value="ECO:0000318"/>
    <property type="project" value="GO_Central"/>
</dbReference>
<dbReference type="GO" id="GO:0005524">
    <property type="term" value="F:ATP binding"/>
    <property type="evidence" value="ECO:0007669"/>
    <property type="project" value="UniProtKB-KW"/>
</dbReference>
<dbReference type="GO" id="GO:0004691">
    <property type="term" value="F:cAMP-dependent protein kinase activity"/>
    <property type="evidence" value="ECO:0000318"/>
    <property type="project" value="GO_Central"/>
</dbReference>
<dbReference type="GO" id="GO:0034237">
    <property type="term" value="F:protein kinase A regulatory subunit binding"/>
    <property type="evidence" value="ECO:0000318"/>
    <property type="project" value="GO_Central"/>
</dbReference>
<dbReference type="GO" id="GO:0106310">
    <property type="term" value="F:protein serine kinase activity"/>
    <property type="evidence" value="ECO:0007669"/>
    <property type="project" value="RHEA"/>
</dbReference>
<dbReference type="GO" id="GO:0007165">
    <property type="term" value="P:signal transduction"/>
    <property type="evidence" value="ECO:0000318"/>
    <property type="project" value="GO_Central"/>
</dbReference>
<dbReference type="FunFam" id="3.30.200.20:FF:000005">
    <property type="entry name" value="cAMP-dependent protein kinase catalytic subunit"/>
    <property type="match status" value="1"/>
</dbReference>
<dbReference type="FunFam" id="1.10.510.10:FF:000850">
    <property type="entry name" value="PRKACB isoform 14"/>
    <property type="match status" value="1"/>
</dbReference>
<dbReference type="Gene3D" id="3.30.200.20">
    <property type="entry name" value="Phosphorylase Kinase, domain 1"/>
    <property type="match status" value="1"/>
</dbReference>
<dbReference type="Gene3D" id="1.10.510.10">
    <property type="entry name" value="Transferase(Phosphotransferase) domain 1"/>
    <property type="match status" value="1"/>
</dbReference>
<dbReference type="InterPro" id="IPR011009">
    <property type="entry name" value="Kinase-like_dom_sf"/>
</dbReference>
<dbReference type="InterPro" id="IPR000719">
    <property type="entry name" value="Prot_kinase_dom"/>
</dbReference>
<dbReference type="InterPro" id="IPR017441">
    <property type="entry name" value="Protein_kinase_ATP_BS"/>
</dbReference>
<dbReference type="InterPro" id="IPR008271">
    <property type="entry name" value="Ser/Thr_kinase_AS"/>
</dbReference>
<dbReference type="PANTHER" id="PTHR24353:SF137">
    <property type="entry name" value="CAMP-DEPENDENT PROTEIN KINASE CATALYTIC SUBUNIT GAMMA"/>
    <property type="match status" value="1"/>
</dbReference>
<dbReference type="PANTHER" id="PTHR24353">
    <property type="entry name" value="CYCLIC NUCLEOTIDE-DEPENDENT PROTEIN KINASE"/>
    <property type="match status" value="1"/>
</dbReference>
<dbReference type="Pfam" id="PF00069">
    <property type="entry name" value="Pkinase"/>
    <property type="match status" value="1"/>
</dbReference>
<dbReference type="SMART" id="SM00220">
    <property type="entry name" value="S_TKc"/>
    <property type="match status" value="1"/>
</dbReference>
<dbReference type="SUPFAM" id="SSF56112">
    <property type="entry name" value="Protein kinase-like (PK-like)"/>
    <property type="match status" value="1"/>
</dbReference>
<dbReference type="PROSITE" id="PS00107">
    <property type="entry name" value="PROTEIN_KINASE_ATP"/>
    <property type="match status" value="1"/>
</dbReference>
<dbReference type="PROSITE" id="PS50011">
    <property type="entry name" value="PROTEIN_KINASE_DOM"/>
    <property type="match status" value="1"/>
</dbReference>
<dbReference type="PROSITE" id="PS00108">
    <property type="entry name" value="PROTEIN_KINASE_ST"/>
    <property type="match status" value="1"/>
</dbReference>
<accession>O62846</accession>
<gene>
    <name type="primary">PRKACG</name>
</gene>
<proteinExistence type="evidence at transcript level"/>
<evidence type="ECO:0000250" key="1"/>
<evidence type="ECO:0000255" key="2">
    <source>
        <dbReference type="PROSITE-ProRule" id="PRU00159"/>
    </source>
</evidence>
<evidence type="ECO:0000255" key="3">
    <source>
        <dbReference type="PROSITE-ProRule" id="PRU10027"/>
    </source>
</evidence>
<evidence type="ECO:0000305" key="4"/>
<organism>
    <name type="scientific">Macaca mulatta</name>
    <name type="common">Rhesus macaque</name>
    <dbReference type="NCBI Taxonomy" id="9544"/>
    <lineage>
        <taxon>Eukaryota</taxon>
        <taxon>Metazoa</taxon>
        <taxon>Chordata</taxon>
        <taxon>Craniata</taxon>
        <taxon>Vertebrata</taxon>
        <taxon>Euteleostomi</taxon>
        <taxon>Mammalia</taxon>
        <taxon>Eutheria</taxon>
        <taxon>Euarchontoglires</taxon>
        <taxon>Primates</taxon>
        <taxon>Haplorrhini</taxon>
        <taxon>Catarrhini</taxon>
        <taxon>Cercopithecidae</taxon>
        <taxon>Cercopithecinae</taxon>
        <taxon>Macaca</taxon>
    </lineage>
</organism>
<feature type="initiator methionine" description="Removed">
    <location>
        <position position="1"/>
    </location>
</feature>
<feature type="chain" id="PRO_0000086065" description="cAMP-dependent protein kinase catalytic subunit gamma">
    <location>
        <begin position="2"/>
        <end position="209" status="greater than"/>
    </location>
</feature>
<feature type="domain" description="Protein kinase" evidence="2">
    <location>
        <begin position="43"/>
        <end position="209" status="greater than"/>
    </location>
</feature>
<feature type="active site" description="Proton acceptor" evidence="2 3">
    <location>
        <position position="166"/>
    </location>
</feature>
<feature type="binding site" evidence="2">
    <location>
        <begin position="49"/>
        <end position="57"/>
    </location>
    <ligand>
        <name>ATP</name>
        <dbReference type="ChEBI" id="CHEBI:30616"/>
    </ligand>
</feature>
<feature type="binding site" evidence="2">
    <location>
        <position position="72"/>
    </location>
    <ligand>
        <name>ATP</name>
        <dbReference type="ChEBI" id="CHEBI:30616"/>
    </ligand>
</feature>
<feature type="modified residue" description="Phosphothreonine; by autocatalysis" evidence="1">
    <location>
        <position position="197"/>
    </location>
</feature>
<feature type="lipid moiety-binding region" description="N-myristoyl glycine" evidence="1">
    <location>
        <position position="2"/>
    </location>
</feature>
<feature type="non-terminal residue">
    <location>
        <position position="209"/>
    </location>
</feature>